<keyword id="KW-0328">Glycosyltransferase</keyword>
<keyword id="KW-0808">Transferase</keyword>
<dbReference type="EC" id="2.4.1.-" evidence="4"/>
<dbReference type="EMBL" id="HM440973">
    <property type="protein sequence ID" value="ADT71702.1"/>
    <property type="molecule type" value="Genomic_DNA"/>
</dbReference>
<dbReference type="SMR" id="E7CQW6"/>
<dbReference type="BioCyc" id="MetaCyc:MONOMER-17750"/>
<dbReference type="GO" id="GO:0016758">
    <property type="term" value="F:hexosyltransferase activity"/>
    <property type="evidence" value="ECO:0007669"/>
    <property type="project" value="UniProtKB-ARBA"/>
</dbReference>
<dbReference type="GO" id="GO:0008194">
    <property type="term" value="F:UDP-glycosyltransferase activity"/>
    <property type="evidence" value="ECO:0007669"/>
    <property type="project" value="InterPro"/>
</dbReference>
<dbReference type="CDD" id="cd03784">
    <property type="entry name" value="GT1_Gtf-like"/>
    <property type="match status" value="1"/>
</dbReference>
<dbReference type="Gene3D" id="3.40.50.2000">
    <property type="entry name" value="Glycogen Phosphorylase B"/>
    <property type="match status" value="2"/>
</dbReference>
<dbReference type="InterPro" id="IPR010610">
    <property type="entry name" value="EryCIII-like_C"/>
</dbReference>
<dbReference type="InterPro" id="IPR002213">
    <property type="entry name" value="UDP_glucos_trans"/>
</dbReference>
<dbReference type="PANTHER" id="PTHR21015:SF22">
    <property type="entry name" value="GLYCOSYLTRANSFERASE"/>
    <property type="match status" value="1"/>
</dbReference>
<dbReference type="PANTHER" id="PTHR21015">
    <property type="entry name" value="UDP-N-ACETYLGLUCOSAMINE--N-ACETYLMURAMYL-(PENTAPEPTIDE) PYROPHOSPHORYL-UNDECAPRENOL N-ACETYLGLUCOSAMINE TRANSFERASE 1"/>
    <property type="match status" value="1"/>
</dbReference>
<dbReference type="Pfam" id="PF06722">
    <property type="entry name" value="EryCIII-like_C"/>
    <property type="match status" value="1"/>
</dbReference>
<dbReference type="SUPFAM" id="SSF53756">
    <property type="entry name" value="UDP-Glycosyltransferase/glycogen phosphorylase"/>
    <property type="match status" value="1"/>
</dbReference>
<gene>
    <name evidence="6" type="primary">ugtA1</name>
</gene>
<feature type="chain" id="PRO_0000443097" description="UDP-glucosyltransferase A1">
    <location>
        <begin position="1"/>
        <end position="463"/>
    </location>
</feature>
<proteinExistence type="evidence at protein level"/>
<reference key="1">
    <citation type="journal article" date="2011" name="FEMS Yeast Res.">
        <title>Identification of the UDP-glucosyltransferase gene UGTA1, responsible for the first glucosylation step in the sophorolipid biosynthetic pathway of Candida bombicola ATCC 22214.</title>
        <authorList>
            <person name="Saerens K.M."/>
            <person name="Roelants S.L."/>
            <person name="Van Bogaert I.N."/>
            <person name="Soetaert W."/>
        </authorList>
    </citation>
    <scope>NUCLEOTIDE SEQUENCE [GENOMIC DNA]</scope>
    <scope>FUNCTION</scope>
    <source>
        <strain>ATCC 22214 / CBS 6009 / JCM 9596 / NBRC 10243 / NRRL Y-17069</strain>
    </source>
</reference>
<reference key="2">
    <citation type="journal article" date="2013" name="J. Proteome Res.">
        <title>SILAC-based proteome analysis of Starmerella bombicola sophorolipid production.</title>
        <authorList>
            <person name="Ciesielska K."/>
            <person name="Li B."/>
            <person name="Groeneboer S."/>
            <person name="Van Bogaert I."/>
            <person name="Lin Y.C."/>
            <person name="Soetaert W."/>
            <person name="Van de Peer Y."/>
            <person name="Devreese B."/>
        </authorList>
    </citation>
    <scope>IDENTIFICATION BY MASS SPECTROMETRY</scope>
    <scope>INDUCTION</scope>
    <source>
        <strain>ATCC 22214 / CBS 6009 / JCM 9596 / NBRC 10243 / NRRL Y-17069</strain>
    </source>
</reference>
<reference key="3">
    <citation type="journal article" date="2013" name="Mol. Microbiol.">
        <title>The biosynthetic gene cluster for sophorolipids: a biotechnological interesting biosurfactant produced by Starmerella bombicola.</title>
        <authorList>
            <person name="Van Bogaert I.N."/>
            <person name="Holvoet K."/>
            <person name="Roelants S.L."/>
            <person name="Li B."/>
            <person name="Lin Y.C."/>
            <person name="Van de Peer Y."/>
            <person name="Soetaert W."/>
        </authorList>
    </citation>
    <scope>FUNCTION</scope>
</reference>
<reference key="4">
    <citation type="journal article" date="2014" name="Appl. Environ. Microbiol.">
        <title>Expression and characterization of CYP52 genes involved in the biosynthesis of sophorolipid and alkane metabolism from Starmerella bombicola.</title>
        <authorList>
            <person name="Huang F.C."/>
            <person name="Peter A."/>
            <person name="Schwab W."/>
        </authorList>
    </citation>
    <scope>FUNCTION</scope>
    <scope>CATALYTIC ACTIVITY</scope>
    <scope>SUBSTRATE SPECIFICITY</scope>
</reference>
<reference key="5">
    <citation type="journal article" date="2015" name="FEMS Yeast Res.">
        <title>Characterization of sophorolipid biosynthetic enzymes from Starmerella bombicola.</title>
        <authorList>
            <person name="Saerens K.M."/>
            <person name="Van Bogaert I.N."/>
            <person name="Soetaert W."/>
        </authorList>
    </citation>
    <scope>FUNCTION</scope>
    <scope>SUBSTRATE SPECIFICITY</scope>
</reference>
<name>UGTA1_STABO</name>
<organism>
    <name type="scientific">Starmerella bombicola</name>
    <name type="common">Yeast</name>
    <name type="synonym">Candida bombicola</name>
    <dbReference type="NCBI Taxonomy" id="75736"/>
    <lineage>
        <taxon>Eukaryota</taxon>
        <taxon>Fungi</taxon>
        <taxon>Dikarya</taxon>
        <taxon>Ascomycota</taxon>
        <taxon>Saccharomycotina</taxon>
        <taxon>Dipodascomycetes</taxon>
        <taxon>Dipodascales</taxon>
        <taxon>Trichomonascaceae</taxon>
        <taxon>Starmerella</taxon>
    </lineage>
</organism>
<comment type="function">
    <text evidence="1 2 4 5">Catalyzes the first glycosylation step of sophorolipid biosynthesis, the coupling of glucose to a hydroxylated fatty acid to give rise to a glucolipid (PubMed:21073653, PubMed:23516968). Can glycosylate all hydroxyl fatty acids generated by cytochrome P450 monooxygenases CYP52M1, CYP52N1 and CYP52E3 into their corresponding glucolipids. Main products are 17-O- and 18-O-(beta-D-glucopyranosyl)-octadecenoic acids (PubMed:24242247, PubMed:26298016).</text>
</comment>
<comment type="catalytic activity">
    <reaction evidence="5">
        <text>18-hydroxy-(9Z)-octadecenoate + UDP-alpha-D-glucose = (9Z)-18-hydroxyoctadec-9-enoate 18-O-beta-D-glucoside + UDP + H(+)</text>
        <dbReference type="Rhea" id="RHEA:60960"/>
        <dbReference type="ChEBI" id="CHEBI:15378"/>
        <dbReference type="ChEBI" id="CHEBI:58223"/>
        <dbReference type="ChEBI" id="CHEBI:58885"/>
        <dbReference type="ChEBI" id="CHEBI:78424"/>
        <dbReference type="ChEBI" id="CHEBI:144061"/>
    </reaction>
</comment>
<comment type="catalytic activity">
    <reaction evidence="5">
        <text>17-hydroxy-(9Z)-octadecenoate + UDP-alpha-D-glucose = (9Z)-17-hydroxyoctadec-9-enoate 17-O-beta-D-glucoside + UDP + H(+)</text>
        <dbReference type="Rhea" id="RHEA:60956"/>
        <dbReference type="ChEBI" id="CHEBI:15378"/>
        <dbReference type="ChEBI" id="CHEBI:58223"/>
        <dbReference type="ChEBI" id="CHEBI:58885"/>
        <dbReference type="ChEBI" id="CHEBI:144040"/>
        <dbReference type="ChEBI" id="CHEBI:144057"/>
    </reaction>
</comment>
<comment type="induction">
    <text evidence="3">Induced in early stationary phase (at protein level).</text>
</comment>
<comment type="similarity">
    <text evidence="8">Belongs to the UDP-glycosyltransferase family.</text>
</comment>
<evidence type="ECO:0000269" key="1">
    <source>
    </source>
</evidence>
<evidence type="ECO:0000269" key="2">
    <source>
    </source>
</evidence>
<evidence type="ECO:0000269" key="3">
    <source>
    </source>
</evidence>
<evidence type="ECO:0000269" key="4">
    <source>
    </source>
</evidence>
<evidence type="ECO:0000269" key="5">
    <source>
    </source>
</evidence>
<evidence type="ECO:0000303" key="6">
    <source>
    </source>
</evidence>
<evidence type="ECO:0000303" key="7">
    <source>
    </source>
</evidence>
<evidence type="ECO:0000305" key="8"/>
<sequence>MSPSSHKPLILACGLPLSGHIMPVLSLVHGLTDDGYEATVVTGRAFEQKVRDVGADFVPLEGNADFDDHTLDDLVPGRKDMAPSFDRTVQDVEHMMVATLPEQFAAIQRAFKKLSASGRPVVLVSEVLFFGAHPISLGAPGFKPAGWICLGVLPLLIRSDHTLGLDNDRSPEAHAKKLAMNHALEHQIFVKATAKHKEICRELGCTEDPKFIWEHSYIAADKFLQLCPPSLEFSRDHLPSNFKFAGSTPKHRTQFTPPSWWGDVLSAKRVIMVTQGTFAVSYKHLIVPTLEALKDEPDTLTVAILGRRGAKLPDDVVVPENARVIDYFNYDALLPHVDALVYNGGYGGLQHSLSHSVPVVIAGDSEDKPMVASRAEAAGVAIDLKTGLPTVEQIKEAVDSIIGNPKFHEASKKVQMELESHNSLKILEESIEEIASHDFGLLTKSDEETEDIPVKGPALAVSS</sequence>
<accession>E7CQW6</accession>
<protein>
    <recommendedName>
        <fullName evidence="6">UDP-glucosyltransferase A1</fullName>
        <shortName evidence="7">GTI</shortName>
        <ecNumber evidence="4">2.4.1.-</ecNumber>
    </recommendedName>
</protein>